<protein>
    <recommendedName>
        <fullName evidence="3">Parbolysin P4</fullName>
    </recommendedName>
    <alternativeName>
        <fullName>Parbolysin 4</fullName>
    </alternativeName>
</protein>
<organism>
    <name type="scientific">Parborlasia corrugatus</name>
    <name type="common">Antarctic nemertean worm</name>
    <dbReference type="NCBI Taxonomy" id="187802"/>
    <lineage>
        <taxon>Eukaryota</taxon>
        <taxon>Metazoa</taxon>
        <taxon>Spiralia</taxon>
        <taxon>Lophotrochozoa</taxon>
        <taxon>Nemertea</taxon>
        <taxon>Pilidiophora</taxon>
        <taxon>Heteronemertea</taxon>
        <taxon>Lineidae</taxon>
        <taxon>Parborlasia</taxon>
    </lineage>
</organism>
<dbReference type="EMBL" id="KT693317">
    <property type="protein sequence ID" value="ALI86908.1"/>
    <property type="molecule type" value="mRNA"/>
</dbReference>
<dbReference type="GO" id="GO:0005576">
    <property type="term" value="C:extracellular region"/>
    <property type="evidence" value="ECO:0007669"/>
    <property type="project" value="UniProtKB-SubCell"/>
</dbReference>
<dbReference type="GO" id="GO:0090729">
    <property type="term" value="F:toxin activity"/>
    <property type="evidence" value="ECO:0007669"/>
    <property type="project" value="UniProtKB-KW"/>
</dbReference>
<dbReference type="GO" id="GO:0031640">
    <property type="term" value="P:killing of cells of another organism"/>
    <property type="evidence" value="ECO:0007669"/>
    <property type="project" value="UniProtKB-KW"/>
</dbReference>
<proteinExistence type="evidence at protein level"/>
<reference key="1">
    <citation type="journal article" date="2015" name="Toxicon">
        <title>Recombinant expression and predicted structure of parborlysin, a cytolytic protein from the Antarctic heteronemertine Parborlasia corrugatus.</title>
        <authorList>
            <person name="Butala M."/>
            <person name="Sega D."/>
            <person name="Tomc B."/>
            <person name="Podlesek Z."/>
            <person name="Kem W.R."/>
            <person name="Kupper F.C."/>
            <person name="Turk T."/>
        </authorList>
    </citation>
    <scope>NUCLEOTIDE SEQUENCE [MRNA]</scope>
</reference>
<reference key="2">
    <citation type="journal article" date="2003" name="Toxicon">
        <title>Isolation and characterisation of a cytolytic protein from mucus secretions of the Antarctic heteronemertine Parborlasia corrugatus.</title>
        <authorList>
            <person name="Berne S."/>
            <person name="Sepcic K."/>
            <person name="Krizaj I."/>
            <person name="Kem W.R."/>
            <person name="McClintock J.B."/>
            <person name="Turk T."/>
        </authorList>
    </citation>
    <scope>PROTEIN SEQUENCE OF 1-25</scope>
    <scope>FUNCTION</scope>
    <scope>SUBCELLULAR LOCATION</scope>
</reference>
<sequence length="93" mass="9752">GWPAYPGPNGIRSSVCQTKLGCGKKNLATKGVCKAFCLGRKRFWQKCGKNGSSGKGSRICNPVLAHAVEKAGKGLIKVTDMAVAAIVKYAGKK</sequence>
<feature type="chain" id="PRO_0000454509" description="Parbolysin P4" evidence="5">
    <location>
        <begin position="1"/>
        <end position="93"/>
    </location>
</feature>
<feature type="disulfide bond" evidence="1">
    <location>
        <begin position="16"/>
        <end position="37"/>
    </location>
</feature>
<feature type="disulfide bond" evidence="1">
    <location>
        <begin position="22"/>
        <end position="33"/>
    </location>
</feature>
<feature type="disulfide bond" evidence="1">
    <location>
        <begin position="47"/>
        <end position="60"/>
    </location>
</feature>
<accession>A0A0N7HUN6</accession>
<name>CXP4_PARCG</name>
<keyword id="KW-0204">Cytolysis</keyword>
<keyword id="KW-0903">Direct protein sequencing</keyword>
<keyword id="KW-1015">Disulfide bond</keyword>
<keyword id="KW-0354">Hemolysis</keyword>
<keyword id="KW-0964">Secreted</keyword>
<keyword id="KW-0800">Toxin</keyword>
<evidence type="ECO:0000250" key="1">
    <source>
        <dbReference type="UniProtKB" id="P01527"/>
    </source>
</evidence>
<evidence type="ECO:0000269" key="2">
    <source>
    </source>
</evidence>
<evidence type="ECO:0000303" key="3">
    <source>
    </source>
</evidence>
<evidence type="ECO:0000305" key="4"/>
<evidence type="ECO:0000305" key="5">
    <source>
    </source>
</evidence>
<evidence type="ECO:0000305" key="6">
    <source>
    </source>
</evidence>
<comment type="function">
    <text evidence="2">Cytolysin that shows hemolytic activity (on bovine erythrocytes, HC(50)=5.75 mg/ml) (PubMed:12657318). This hemolytic activity is completely inhibited by small unilamelar vesicles composed of PC/PG, PC/PI and PC/PS in 1:1 molar ratios (with at least 100 mg/ml concentration) (PubMed:12657318).</text>
</comment>
<comment type="subcellular location">
    <subcellularLocation>
        <location evidence="5 6">Secreted</location>
    </subcellularLocation>
</comment>
<comment type="tissue specificity">
    <text evidence="6">Localized within the skin and proboscis and are most readily isolated from body mucus secretions.</text>
</comment>
<comment type="similarity">
    <text evidence="4">Belongs to the worm cytolysin family.</text>
</comment>